<accession>B3Q8C2</accession>
<evidence type="ECO:0000255" key="1">
    <source>
        <dbReference type="HAMAP-Rule" id="MF_00076"/>
    </source>
</evidence>
<protein>
    <recommendedName>
        <fullName evidence="1">Imidazoleglycerol-phosphate dehydratase</fullName>
        <shortName evidence="1">IGPD</shortName>
        <ecNumber evidence="1">4.2.1.19</ecNumber>
    </recommendedName>
</protein>
<name>HIS7_RHOPT</name>
<proteinExistence type="inferred from homology"/>
<dbReference type="EC" id="4.2.1.19" evidence="1"/>
<dbReference type="EMBL" id="CP001096">
    <property type="protein sequence ID" value="ACE98871.1"/>
    <property type="molecule type" value="Genomic_DNA"/>
</dbReference>
<dbReference type="RefSeq" id="WP_012494058.1">
    <property type="nucleotide sequence ID" value="NC_011004.1"/>
</dbReference>
<dbReference type="SMR" id="B3Q8C2"/>
<dbReference type="KEGG" id="rpt:Rpal_0311"/>
<dbReference type="HOGENOM" id="CLU_044308_2_0_5"/>
<dbReference type="OrthoDB" id="9813612at2"/>
<dbReference type="UniPathway" id="UPA00031">
    <property type="reaction ID" value="UER00011"/>
</dbReference>
<dbReference type="Proteomes" id="UP000001725">
    <property type="component" value="Chromosome"/>
</dbReference>
<dbReference type="GO" id="GO:0005737">
    <property type="term" value="C:cytoplasm"/>
    <property type="evidence" value="ECO:0007669"/>
    <property type="project" value="UniProtKB-SubCell"/>
</dbReference>
<dbReference type="GO" id="GO:0004424">
    <property type="term" value="F:imidazoleglycerol-phosphate dehydratase activity"/>
    <property type="evidence" value="ECO:0007669"/>
    <property type="project" value="UniProtKB-UniRule"/>
</dbReference>
<dbReference type="GO" id="GO:0000105">
    <property type="term" value="P:L-histidine biosynthetic process"/>
    <property type="evidence" value="ECO:0007669"/>
    <property type="project" value="UniProtKB-UniRule"/>
</dbReference>
<dbReference type="CDD" id="cd07914">
    <property type="entry name" value="IGPD"/>
    <property type="match status" value="1"/>
</dbReference>
<dbReference type="FunFam" id="3.30.230.40:FF:000001">
    <property type="entry name" value="Imidazoleglycerol-phosphate dehydratase HisB"/>
    <property type="match status" value="1"/>
</dbReference>
<dbReference type="FunFam" id="3.30.230.40:FF:000003">
    <property type="entry name" value="Imidazoleglycerol-phosphate dehydratase HisB"/>
    <property type="match status" value="1"/>
</dbReference>
<dbReference type="Gene3D" id="3.30.230.40">
    <property type="entry name" value="Imidazole glycerol phosphate dehydratase, domain 1"/>
    <property type="match status" value="2"/>
</dbReference>
<dbReference type="HAMAP" id="MF_00076">
    <property type="entry name" value="HisB"/>
    <property type="match status" value="1"/>
</dbReference>
<dbReference type="InterPro" id="IPR038494">
    <property type="entry name" value="IGPD_sf"/>
</dbReference>
<dbReference type="InterPro" id="IPR000807">
    <property type="entry name" value="ImidazoleglycerolP_deHydtase"/>
</dbReference>
<dbReference type="InterPro" id="IPR020565">
    <property type="entry name" value="ImidazoleglycerP_deHydtase_CS"/>
</dbReference>
<dbReference type="InterPro" id="IPR020568">
    <property type="entry name" value="Ribosomal_Su5_D2-typ_SF"/>
</dbReference>
<dbReference type="NCBIfam" id="NF002109">
    <property type="entry name" value="PRK00951.1-5"/>
    <property type="match status" value="1"/>
</dbReference>
<dbReference type="NCBIfam" id="NF002111">
    <property type="entry name" value="PRK00951.2-1"/>
    <property type="match status" value="1"/>
</dbReference>
<dbReference type="NCBIfam" id="NF002114">
    <property type="entry name" value="PRK00951.2-4"/>
    <property type="match status" value="1"/>
</dbReference>
<dbReference type="PANTHER" id="PTHR23133:SF2">
    <property type="entry name" value="IMIDAZOLEGLYCEROL-PHOSPHATE DEHYDRATASE"/>
    <property type="match status" value="1"/>
</dbReference>
<dbReference type="PANTHER" id="PTHR23133">
    <property type="entry name" value="IMIDAZOLEGLYCEROL-PHOSPHATE DEHYDRATASE HIS7"/>
    <property type="match status" value="1"/>
</dbReference>
<dbReference type="Pfam" id="PF00475">
    <property type="entry name" value="IGPD"/>
    <property type="match status" value="1"/>
</dbReference>
<dbReference type="SUPFAM" id="SSF54211">
    <property type="entry name" value="Ribosomal protein S5 domain 2-like"/>
    <property type="match status" value="2"/>
</dbReference>
<dbReference type="PROSITE" id="PS00954">
    <property type="entry name" value="IGP_DEHYDRATASE_1"/>
    <property type="match status" value="1"/>
</dbReference>
<dbReference type="PROSITE" id="PS00955">
    <property type="entry name" value="IGP_DEHYDRATASE_2"/>
    <property type="match status" value="1"/>
</dbReference>
<keyword id="KW-0028">Amino-acid biosynthesis</keyword>
<keyword id="KW-0963">Cytoplasm</keyword>
<keyword id="KW-0368">Histidine biosynthesis</keyword>
<keyword id="KW-0456">Lyase</keyword>
<organism>
    <name type="scientific">Rhodopseudomonas palustris (strain TIE-1)</name>
    <dbReference type="NCBI Taxonomy" id="395960"/>
    <lineage>
        <taxon>Bacteria</taxon>
        <taxon>Pseudomonadati</taxon>
        <taxon>Pseudomonadota</taxon>
        <taxon>Alphaproteobacteria</taxon>
        <taxon>Hyphomicrobiales</taxon>
        <taxon>Nitrobacteraceae</taxon>
        <taxon>Rhodopseudomonas</taxon>
    </lineage>
</organism>
<reference key="1">
    <citation type="submission" date="2008-05" db="EMBL/GenBank/DDBJ databases">
        <title>Complete sequence of Rhodopseudomonas palustris TIE-1.</title>
        <authorList>
            <consortium name="US DOE Joint Genome Institute"/>
            <person name="Lucas S."/>
            <person name="Copeland A."/>
            <person name="Lapidus A."/>
            <person name="Glavina del Rio T."/>
            <person name="Dalin E."/>
            <person name="Tice H."/>
            <person name="Pitluck S."/>
            <person name="Chain P."/>
            <person name="Malfatti S."/>
            <person name="Shin M."/>
            <person name="Vergez L."/>
            <person name="Lang D."/>
            <person name="Schmutz J."/>
            <person name="Larimer F."/>
            <person name="Land M."/>
            <person name="Hauser L."/>
            <person name="Kyrpides N."/>
            <person name="Mikhailova N."/>
            <person name="Emerson D."/>
            <person name="Newman D.K."/>
            <person name="Roden E."/>
            <person name="Richardson P."/>
        </authorList>
    </citation>
    <scope>NUCLEOTIDE SEQUENCE [LARGE SCALE GENOMIC DNA]</scope>
    <source>
        <strain>TIE-1</strain>
    </source>
</reference>
<feature type="chain" id="PRO_1000092714" description="Imidazoleglycerol-phosphate dehydratase">
    <location>
        <begin position="1"/>
        <end position="197"/>
    </location>
</feature>
<comment type="catalytic activity">
    <reaction evidence="1">
        <text>D-erythro-1-(imidazol-4-yl)glycerol 3-phosphate = 3-(imidazol-4-yl)-2-oxopropyl phosphate + H2O</text>
        <dbReference type="Rhea" id="RHEA:11040"/>
        <dbReference type="ChEBI" id="CHEBI:15377"/>
        <dbReference type="ChEBI" id="CHEBI:57766"/>
        <dbReference type="ChEBI" id="CHEBI:58278"/>
        <dbReference type="EC" id="4.2.1.19"/>
    </reaction>
</comment>
<comment type="pathway">
    <text evidence="1">Amino-acid biosynthesis; L-histidine biosynthesis; L-histidine from 5-phospho-alpha-D-ribose 1-diphosphate: step 6/9.</text>
</comment>
<comment type="subcellular location">
    <subcellularLocation>
        <location evidence="1">Cytoplasm</location>
    </subcellularLocation>
</comment>
<comment type="similarity">
    <text evidence="1">Belongs to the imidazoleglycerol-phosphate dehydratase family.</text>
</comment>
<sequence length="197" mass="21349">MRTATIKRKTKETDIEVTVDLDGTGVANAATGIGFFDHMLDLLAKHSRIDLTVKAVGDLHVDFHHTTEDVGIALGQAVKQALGNMAGITRYATVLMPMDETLTRVVIDVSGRPFLVFKADFPRDKIGEFDTELVREWFQAFAMNAGVTLHVETLYGENSHHIAESCFKGLARALRAAVAIDPKTAGEVPSTKGQLGG</sequence>
<gene>
    <name evidence="1" type="primary">hisB</name>
    <name type="ordered locus">Rpal_0311</name>
</gene>